<feature type="chain" id="PRO_1000099462" description="UvrABC system protein C">
    <location>
        <begin position="1"/>
        <end position="602"/>
    </location>
</feature>
<feature type="domain" description="GIY-YIG" evidence="1">
    <location>
        <begin position="17"/>
        <end position="94"/>
    </location>
</feature>
<feature type="domain" description="UVR" evidence="1">
    <location>
        <begin position="199"/>
        <end position="234"/>
    </location>
</feature>
<comment type="function">
    <text evidence="1">The UvrABC repair system catalyzes the recognition and processing of DNA lesions. UvrC both incises the 5' and 3' sides of the lesion. The N-terminal half is responsible for the 3' incision and the C-terminal half is responsible for the 5' incision.</text>
</comment>
<comment type="subunit">
    <text evidence="1">Interacts with UvrB in an incision complex.</text>
</comment>
<comment type="subcellular location">
    <subcellularLocation>
        <location evidence="1">Cytoplasm</location>
    </subcellularLocation>
</comment>
<comment type="similarity">
    <text evidence="1">Belongs to the UvrC family.</text>
</comment>
<accession>B5RRR0</accession>
<evidence type="ECO:0000255" key="1">
    <source>
        <dbReference type="HAMAP-Rule" id="MF_00203"/>
    </source>
</evidence>
<sequence>MRKHLNDLYKQIEKFPKTSGCYKMYSKDNKILYIGKAKNLRSRVKNYFSKRTSHKTKILMNNVTNIEIITTNSEYEALLLECNLIKKYKPTYNIKLKDDKGYPMIRITCEKYPRIFKTRKIINDGSEYFGPYVNVKNLDLVLDLINKTFKTKKCKKKSKNPCLYFHMGQCLGVCYREDLEDEYRKEIEQIKHILNGNISKLLNDIEIKMKEVIMKENFEAAIKLKETKKSLIEISQTQIITKIDKLSEDYLYIHKTNSLNTIVILKYKDGKLTEKDIHFDESIYEEDELIEKFITQYYTSPNMIVPDKIHIFKKIDTSNITKLINELKNIKTEIIYKETKDNIKIIEMATSNAKLALITYNHEKNKAIENLKTILEMKKLPKTIEGFDIAHINGYKTVASLVTFKMGKPFKDGYRVYKINSLSNGEIDDCKAIKEVISRRYSKLINEQLKLPDLILIDGGKGQLNSAYSILKGLRIEEKIAICALAKKEEIIFLPNKNQGIKLQKRNSALQVLQNVRDEAHRRANNFNNKLHNNIKLNYTKIKGIGEQKAKKILKVLGTYKDILLLNEDEIATKMKINITMANKIKKFAEEQNLNNKQNNHI</sequence>
<protein>
    <recommendedName>
        <fullName evidence="1">UvrABC system protein C</fullName>
        <shortName evidence="1">Protein UvrC</shortName>
    </recommendedName>
    <alternativeName>
        <fullName evidence="1">Excinuclease ABC subunit C</fullName>
    </alternativeName>
</protein>
<dbReference type="EMBL" id="CP000993">
    <property type="protein sequence ID" value="ACH94694.1"/>
    <property type="molecule type" value="Genomic_DNA"/>
</dbReference>
<dbReference type="RefSeq" id="WP_012538917.1">
    <property type="nucleotide sequence ID" value="NC_011244.1"/>
</dbReference>
<dbReference type="SMR" id="B5RRR0"/>
<dbReference type="KEGG" id="bre:BRE_458"/>
<dbReference type="HOGENOM" id="CLU_014841_3_2_12"/>
<dbReference type="Proteomes" id="UP000000612">
    <property type="component" value="Chromosome"/>
</dbReference>
<dbReference type="GO" id="GO:0005737">
    <property type="term" value="C:cytoplasm"/>
    <property type="evidence" value="ECO:0007669"/>
    <property type="project" value="UniProtKB-SubCell"/>
</dbReference>
<dbReference type="GO" id="GO:0009380">
    <property type="term" value="C:excinuclease repair complex"/>
    <property type="evidence" value="ECO:0007669"/>
    <property type="project" value="InterPro"/>
</dbReference>
<dbReference type="GO" id="GO:0003677">
    <property type="term" value="F:DNA binding"/>
    <property type="evidence" value="ECO:0007669"/>
    <property type="project" value="UniProtKB-UniRule"/>
</dbReference>
<dbReference type="GO" id="GO:0009381">
    <property type="term" value="F:excinuclease ABC activity"/>
    <property type="evidence" value="ECO:0007669"/>
    <property type="project" value="UniProtKB-UniRule"/>
</dbReference>
<dbReference type="GO" id="GO:0006289">
    <property type="term" value="P:nucleotide-excision repair"/>
    <property type="evidence" value="ECO:0007669"/>
    <property type="project" value="UniProtKB-UniRule"/>
</dbReference>
<dbReference type="GO" id="GO:0009432">
    <property type="term" value="P:SOS response"/>
    <property type="evidence" value="ECO:0007669"/>
    <property type="project" value="UniProtKB-UniRule"/>
</dbReference>
<dbReference type="CDD" id="cd10434">
    <property type="entry name" value="GIY-YIG_UvrC_Cho"/>
    <property type="match status" value="1"/>
</dbReference>
<dbReference type="FunFam" id="3.40.1440.10:FF:000001">
    <property type="entry name" value="UvrABC system protein C"/>
    <property type="match status" value="1"/>
</dbReference>
<dbReference type="Gene3D" id="1.10.150.20">
    <property type="entry name" value="5' to 3' exonuclease, C-terminal subdomain"/>
    <property type="match status" value="1"/>
</dbReference>
<dbReference type="Gene3D" id="3.40.1440.10">
    <property type="entry name" value="GIY-YIG endonuclease"/>
    <property type="match status" value="1"/>
</dbReference>
<dbReference type="Gene3D" id="3.30.420.340">
    <property type="entry name" value="UvrC, RNAse H endonuclease domain"/>
    <property type="match status" value="1"/>
</dbReference>
<dbReference type="HAMAP" id="MF_00203">
    <property type="entry name" value="UvrC"/>
    <property type="match status" value="1"/>
</dbReference>
<dbReference type="InterPro" id="IPR000305">
    <property type="entry name" value="GIY-YIG_endonuc"/>
</dbReference>
<dbReference type="InterPro" id="IPR035901">
    <property type="entry name" value="GIY-YIG_endonuc_sf"/>
</dbReference>
<dbReference type="InterPro" id="IPR047296">
    <property type="entry name" value="GIY-YIG_UvrC_Cho"/>
</dbReference>
<dbReference type="InterPro" id="IPR010994">
    <property type="entry name" value="RuvA_2-like"/>
</dbReference>
<dbReference type="InterPro" id="IPR050066">
    <property type="entry name" value="UvrABC_protein_C"/>
</dbReference>
<dbReference type="InterPro" id="IPR004791">
    <property type="entry name" value="UvrC"/>
</dbReference>
<dbReference type="InterPro" id="IPR001162">
    <property type="entry name" value="UvrC_RNase_H_dom"/>
</dbReference>
<dbReference type="InterPro" id="IPR038476">
    <property type="entry name" value="UvrC_RNase_H_dom_sf"/>
</dbReference>
<dbReference type="NCBIfam" id="NF011264">
    <property type="entry name" value="PRK14670.1"/>
    <property type="match status" value="1"/>
</dbReference>
<dbReference type="NCBIfam" id="TIGR00194">
    <property type="entry name" value="uvrC"/>
    <property type="match status" value="1"/>
</dbReference>
<dbReference type="PANTHER" id="PTHR30562:SF1">
    <property type="entry name" value="UVRABC SYSTEM PROTEIN C"/>
    <property type="match status" value="1"/>
</dbReference>
<dbReference type="PANTHER" id="PTHR30562">
    <property type="entry name" value="UVRC/OXIDOREDUCTASE"/>
    <property type="match status" value="1"/>
</dbReference>
<dbReference type="Pfam" id="PF01541">
    <property type="entry name" value="GIY-YIG"/>
    <property type="match status" value="1"/>
</dbReference>
<dbReference type="Pfam" id="PF22920">
    <property type="entry name" value="UvrC_RNaseH"/>
    <property type="match status" value="1"/>
</dbReference>
<dbReference type="Pfam" id="PF08459">
    <property type="entry name" value="UvrC_RNaseH_dom"/>
    <property type="match status" value="1"/>
</dbReference>
<dbReference type="SMART" id="SM00465">
    <property type="entry name" value="GIYc"/>
    <property type="match status" value="1"/>
</dbReference>
<dbReference type="SUPFAM" id="SSF82771">
    <property type="entry name" value="GIY-YIG endonuclease"/>
    <property type="match status" value="1"/>
</dbReference>
<dbReference type="SUPFAM" id="SSF47781">
    <property type="entry name" value="RuvA domain 2-like"/>
    <property type="match status" value="1"/>
</dbReference>
<dbReference type="PROSITE" id="PS50164">
    <property type="entry name" value="GIY_YIG"/>
    <property type="match status" value="1"/>
</dbReference>
<dbReference type="PROSITE" id="PS50165">
    <property type="entry name" value="UVRC"/>
    <property type="match status" value="1"/>
</dbReference>
<gene>
    <name evidence="1" type="primary">uvrC</name>
    <name type="ordered locus">BRE_458</name>
</gene>
<name>UVRC_BORRA</name>
<organism>
    <name type="scientific">Borrelia recurrentis (strain A1)</name>
    <dbReference type="NCBI Taxonomy" id="412418"/>
    <lineage>
        <taxon>Bacteria</taxon>
        <taxon>Pseudomonadati</taxon>
        <taxon>Spirochaetota</taxon>
        <taxon>Spirochaetia</taxon>
        <taxon>Spirochaetales</taxon>
        <taxon>Borreliaceae</taxon>
        <taxon>Borrelia</taxon>
    </lineage>
</organism>
<reference key="1">
    <citation type="journal article" date="2008" name="PLoS Genet.">
        <title>The genome of Borrelia recurrentis, the agent of deadly louse-borne relapsing fever, is a degraded subset of tick-borne Borrelia duttonii.</title>
        <authorList>
            <person name="Lescot M."/>
            <person name="Audic S."/>
            <person name="Robert C."/>
            <person name="Nguyen T.T."/>
            <person name="Blanc G."/>
            <person name="Cutler S.J."/>
            <person name="Wincker P."/>
            <person name="Couloux A."/>
            <person name="Claverie J.-M."/>
            <person name="Raoult D."/>
            <person name="Drancourt M."/>
        </authorList>
    </citation>
    <scope>NUCLEOTIDE SEQUENCE [LARGE SCALE GENOMIC DNA]</scope>
    <source>
        <strain>A1</strain>
    </source>
</reference>
<proteinExistence type="inferred from homology"/>
<keyword id="KW-0963">Cytoplasm</keyword>
<keyword id="KW-0227">DNA damage</keyword>
<keyword id="KW-0228">DNA excision</keyword>
<keyword id="KW-0234">DNA repair</keyword>
<keyword id="KW-0267">Excision nuclease</keyword>
<keyword id="KW-0742">SOS response</keyword>